<proteinExistence type="inferred from homology"/>
<evidence type="ECO:0000305" key="1"/>
<organismHost>
    <name type="scientific">Acheta domesticus</name>
    <name type="common">House cricket</name>
    <dbReference type="NCBI Taxonomy" id="6997"/>
</organismHost>
<organismHost>
    <name type="scientific">Chilo suppressalis</name>
    <name type="common">Asiatic rice borer moth</name>
    <dbReference type="NCBI Taxonomy" id="168631"/>
</organismHost>
<organismHost>
    <name type="scientific">Gryllus bimaculatus</name>
    <name type="common">Two-spotted cricket</name>
    <dbReference type="NCBI Taxonomy" id="6999"/>
</organismHost>
<organismHost>
    <name type="scientific">Gryllus campestris</name>
    <dbReference type="NCBI Taxonomy" id="58607"/>
</organismHost>
<organismHost>
    <name type="scientific">Spodoptera frugiperda</name>
    <name type="common">Fall armyworm</name>
    <dbReference type="NCBI Taxonomy" id="7108"/>
</organismHost>
<keyword id="KW-1185">Reference proteome</keyword>
<protein>
    <recommendedName>
        <fullName>Uncharacterized protein 309L</fullName>
    </recommendedName>
</protein>
<organism>
    <name type="scientific">Invertebrate iridescent virus 6</name>
    <name type="common">IIV-6</name>
    <name type="synonym">Chilo iridescent virus</name>
    <dbReference type="NCBI Taxonomy" id="176652"/>
    <lineage>
        <taxon>Viruses</taxon>
        <taxon>Varidnaviria</taxon>
        <taxon>Bamfordvirae</taxon>
        <taxon>Nucleocytoviricota</taxon>
        <taxon>Megaviricetes</taxon>
        <taxon>Pimascovirales</taxon>
        <taxon>Iridoviridae</taxon>
        <taxon>Betairidovirinae</taxon>
        <taxon>Iridovirus</taxon>
    </lineage>
</organism>
<name>VF309_IIV6</name>
<reference key="1">
    <citation type="journal article" date="2001" name="Virology">
        <title>Analysis of the first complete DNA sequence of an invertebrate iridovirus: coding strategy of the genome of Chilo iridescent virus.</title>
        <authorList>
            <person name="Jakob N.J."/>
            <person name="Mueller K."/>
            <person name="Bahr U."/>
            <person name="Darai G."/>
        </authorList>
    </citation>
    <scope>NUCLEOTIDE SEQUENCE [LARGE SCALE GENOMIC DNA]</scope>
</reference>
<reference key="2">
    <citation type="journal article" date="2007" name="Virol. J.">
        <title>Comparative genomic analysis of the family Iridoviridae: re-annotating and defining the core set of iridovirus genes.</title>
        <authorList>
            <person name="Eaton H.E."/>
            <person name="Metcalf J."/>
            <person name="Penny E."/>
            <person name="Tcherepanov V."/>
            <person name="Upton C."/>
            <person name="Brunetti C.R."/>
        </authorList>
    </citation>
    <scope>GENOME REANNOTATION</scope>
</reference>
<dbReference type="EMBL" id="AF303741">
    <property type="protein sequence ID" value="AAK82170.1"/>
    <property type="molecule type" value="Genomic_DNA"/>
</dbReference>
<dbReference type="RefSeq" id="NP_149772.1">
    <property type="nucleotide sequence ID" value="NC_003038.1"/>
</dbReference>
<dbReference type="KEGG" id="vg:1733398"/>
<dbReference type="OrthoDB" id="30810at10239"/>
<dbReference type="Proteomes" id="UP000001359">
    <property type="component" value="Genome"/>
</dbReference>
<gene>
    <name type="ORF">IIV6-309L</name>
</gene>
<feature type="chain" id="PRO_0000377853" description="Uncharacterized protein 309L">
    <location>
        <begin position="1"/>
        <end position="217"/>
    </location>
</feature>
<sequence>MANIIYINDLRSNRDSDFTKTPIGYVANDSTSRPILGLGDKLELDVPPLTSGDFGNIRASIEGTNEFSDIESSENKTVYHNYSDVDKGQIQYYVDTNFVNPFQPFFKDNNHIVMKQIMPDRTIEYTRQAIVPIQKDTSLDPVYDQQLLKLENPSLYSGYPMGKGYLQFSAGEARMGPNKLYNPNQWFVDTQNQREDVQALQMRTIIRQNYAPAQLFS</sequence>
<comment type="similarity">
    <text evidence="1">Belongs to the IIV-6 309L family.</text>
</comment>
<accession>Q91FL5</accession>